<organism>
    <name type="scientific">Thermococcus litoralis (strain ATCC 51850 / DSM 5473 / JCM 8560 / NS-C)</name>
    <dbReference type="NCBI Taxonomy" id="523849"/>
    <lineage>
        <taxon>Archaea</taxon>
        <taxon>Methanobacteriati</taxon>
        <taxon>Methanobacteriota</taxon>
        <taxon>Thermococci</taxon>
        <taxon>Thermococcales</taxon>
        <taxon>Thermococcaceae</taxon>
        <taxon>Thermococcus</taxon>
    </lineage>
</organism>
<feature type="chain" id="PRO_0000112130" description="Pyruvate kinase">
    <location>
        <begin position="1"/>
        <end position="475"/>
    </location>
</feature>
<feature type="binding site" evidence="1">
    <location>
        <position position="36"/>
    </location>
    <ligand>
        <name>substrate</name>
    </ligand>
</feature>
<feature type="binding site" evidence="2">
    <location>
        <begin position="38"/>
        <end position="41"/>
    </location>
    <ligand>
        <name>ATP</name>
        <dbReference type="ChEBI" id="CHEBI:30616"/>
    </ligand>
</feature>
<feature type="binding site" evidence="1">
    <location>
        <position position="38"/>
    </location>
    <ligand>
        <name>K(+)</name>
        <dbReference type="ChEBI" id="CHEBI:29103"/>
    </ligand>
</feature>
<feature type="binding site" evidence="1">
    <location>
        <position position="40"/>
    </location>
    <ligand>
        <name>K(+)</name>
        <dbReference type="ChEBI" id="CHEBI:29103"/>
    </ligand>
</feature>
<feature type="binding site" evidence="1">
    <location>
        <position position="70"/>
    </location>
    <ligand>
        <name>K(+)</name>
        <dbReference type="ChEBI" id="CHEBI:29103"/>
    </ligand>
</feature>
<feature type="binding site" evidence="2">
    <location>
        <position position="77"/>
    </location>
    <ligand>
        <name>ATP</name>
        <dbReference type="ChEBI" id="CHEBI:30616"/>
    </ligand>
</feature>
<feature type="binding site" evidence="2">
    <location>
        <position position="158"/>
    </location>
    <ligand>
        <name>ATP</name>
        <dbReference type="ChEBI" id="CHEBI:30616"/>
    </ligand>
</feature>
<feature type="binding site" evidence="1">
    <location>
        <position position="223"/>
    </location>
    <ligand>
        <name>Mg(2+)</name>
        <dbReference type="ChEBI" id="CHEBI:18420"/>
    </ligand>
</feature>
<feature type="binding site" evidence="1">
    <location>
        <position position="246"/>
    </location>
    <ligand>
        <name>substrate</name>
    </ligand>
</feature>
<feature type="binding site" evidence="1">
    <location>
        <position position="247"/>
    </location>
    <ligand>
        <name>Mg(2+)</name>
        <dbReference type="ChEBI" id="CHEBI:18420"/>
    </ligand>
</feature>
<feature type="binding site" evidence="1">
    <location>
        <position position="247"/>
    </location>
    <ligand>
        <name>substrate</name>
    </ligand>
</feature>
<feature type="binding site" evidence="1">
    <location>
        <position position="279"/>
    </location>
    <ligand>
        <name>substrate</name>
    </ligand>
</feature>
<feature type="site" description="Transition state stabilizer" evidence="1">
    <location>
        <position position="221"/>
    </location>
</feature>
<feature type="sequence conflict" description="In Ref. 2; CAA58793." evidence="3" ref="2">
    <original>T</original>
    <variation>S</variation>
    <location>
        <position position="23"/>
    </location>
</feature>
<protein>
    <recommendedName>
        <fullName>Pyruvate kinase</fullName>
        <shortName>PK</shortName>
        <ecNumber>2.7.1.40</ecNumber>
    </recommendedName>
</protein>
<gene>
    <name type="primary">pki</name>
    <name type="ORF">OCC_05009</name>
</gene>
<keyword id="KW-0067">ATP-binding</keyword>
<keyword id="KW-0324">Glycolysis</keyword>
<keyword id="KW-0418">Kinase</keyword>
<keyword id="KW-0460">Magnesium</keyword>
<keyword id="KW-0479">Metal-binding</keyword>
<keyword id="KW-0547">Nucleotide-binding</keyword>
<keyword id="KW-0630">Potassium</keyword>
<keyword id="KW-0670">Pyruvate</keyword>
<keyword id="KW-0808">Transferase</keyword>
<sequence length="475" mass="52767">MELPSHKTKIIATIGPASKQKETIKKMIKAGMSVARINFSHGTLEEHAKTIETVRDVAEKLERRVAILGDLPGLKMRVGKIKGDSVTLRKGDKVVLTTRDIEGDETTIPVEFKDLPKLVSKGDTIYLSDGYIMLRVEEVRENEVECVVVNGGILFSHKGINIPKANLPIEAITPRDFEIIEFAIEHGVDAIGLSFVGSVYDVLKVKSFLEKKSADLFVIAKIERPDAVRNFDEILNAADGIMIARGDLGVEMPIEKLPIMQKQLIKKTNLAAKPVITATQMLVSMTTERIPKRAEVTDVANAILDGTDAVMLSEETAIGKYPVESVEMMAKIAKTTEEYRESLGYSRLRAWIDSLPKRSTIKEAITRSVIDALCAIDIKYILTPTRTGLTPRLISRFKPKQWILAFSSSERVCNNLAFSYGVYPFCMDENFNEKDIIMLVKGLGIVKEDDTVLLTEGRPIGKTVGTNTMRIFQIP</sequence>
<accession>Q56301</accession>
<accession>H3ZJK4</accession>
<dbReference type="EC" id="2.7.1.40"/>
<dbReference type="EMBL" id="CP006670">
    <property type="protein sequence ID" value="EHR79867.1"/>
    <property type="molecule type" value="Genomic_DNA"/>
</dbReference>
<dbReference type="EMBL" id="X83963">
    <property type="protein sequence ID" value="CAA58793.1"/>
    <property type="status" value="ALT_INIT"/>
    <property type="molecule type" value="Genomic_DNA"/>
</dbReference>
<dbReference type="PIR" id="A57418">
    <property type="entry name" value="A57418"/>
</dbReference>
<dbReference type="RefSeq" id="WP_004066098.1">
    <property type="nucleotide sequence ID" value="NC_022084.1"/>
</dbReference>
<dbReference type="SMR" id="Q56301"/>
<dbReference type="STRING" id="523849.OCC_05009"/>
<dbReference type="PaxDb" id="523849-OCC_05009"/>
<dbReference type="GeneID" id="16548766"/>
<dbReference type="KEGG" id="tlt:OCC_05009"/>
<dbReference type="HOGENOM" id="CLU_015439_0_2_2"/>
<dbReference type="OrthoDB" id="56298at2157"/>
<dbReference type="UniPathway" id="UPA00109">
    <property type="reaction ID" value="UER00188"/>
</dbReference>
<dbReference type="Proteomes" id="UP000015502">
    <property type="component" value="Chromosome"/>
</dbReference>
<dbReference type="GO" id="GO:0005524">
    <property type="term" value="F:ATP binding"/>
    <property type="evidence" value="ECO:0007669"/>
    <property type="project" value="UniProtKB-KW"/>
</dbReference>
<dbReference type="GO" id="GO:0016301">
    <property type="term" value="F:kinase activity"/>
    <property type="evidence" value="ECO:0007669"/>
    <property type="project" value="UniProtKB-KW"/>
</dbReference>
<dbReference type="GO" id="GO:0000287">
    <property type="term" value="F:magnesium ion binding"/>
    <property type="evidence" value="ECO:0007669"/>
    <property type="project" value="InterPro"/>
</dbReference>
<dbReference type="GO" id="GO:0030955">
    <property type="term" value="F:potassium ion binding"/>
    <property type="evidence" value="ECO:0007669"/>
    <property type="project" value="InterPro"/>
</dbReference>
<dbReference type="GO" id="GO:0004743">
    <property type="term" value="F:pyruvate kinase activity"/>
    <property type="evidence" value="ECO:0007669"/>
    <property type="project" value="UniProtKB-EC"/>
</dbReference>
<dbReference type="FunFam" id="2.40.33.10:FF:000001">
    <property type="entry name" value="Pyruvate kinase"/>
    <property type="match status" value="1"/>
</dbReference>
<dbReference type="Gene3D" id="3.20.20.60">
    <property type="entry name" value="Phosphoenolpyruvate-binding domains"/>
    <property type="match status" value="1"/>
</dbReference>
<dbReference type="Gene3D" id="2.40.33.10">
    <property type="entry name" value="PK beta-barrel domain-like"/>
    <property type="match status" value="1"/>
</dbReference>
<dbReference type="Gene3D" id="3.40.1380.20">
    <property type="entry name" value="Pyruvate kinase, C-terminal domain"/>
    <property type="match status" value="1"/>
</dbReference>
<dbReference type="InterPro" id="IPR001697">
    <property type="entry name" value="Pyr_Knase"/>
</dbReference>
<dbReference type="InterPro" id="IPR015813">
    <property type="entry name" value="Pyrv/PenolPyrv_kinase-like_dom"/>
</dbReference>
<dbReference type="InterPro" id="IPR040442">
    <property type="entry name" value="Pyrv_kinase-like_dom_sf"/>
</dbReference>
<dbReference type="InterPro" id="IPR011037">
    <property type="entry name" value="Pyrv_Knase-like_insert_dom_sf"/>
</dbReference>
<dbReference type="InterPro" id="IPR018209">
    <property type="entry name" value="Pyrv_Knase_AS"/>
</dbReference>
<dbReference type="InterPro" id="IPR015793">
    <property type="entry name" value="Pyrv_Knase_brl"/>
</dbReference>
<dbReference type="InterPro" id="IPR015795">
    <property type="entry name" value="Pyrv_Knase_C"/>
</dbReference>
<dbReference type="InterPro" id="IPR036918">
    <property type="entry name" value="Pyrv_Knase_C_sf"/>
</dbReference>
<dbReference type="InterPro" id="IPR015806">
    <property type="entry name" value="Pyrv_Knase_insert_dom_sf"/>
</dbReference>
<dbReference type="NCBIfam" id="NF004491">
    <property type="entry name" value="PRK05826.1"/>
    <property type="match status" value="1"/>
</dbReference>
<dbReference type="NCBIfam" id="NF004978">
    <property type="entry name" value="PRK06354.1"/>
    <property type="match status" value="1"/>
</dbReference>
<dbReference type="NCBIfam" id="TIGR01064">
    <property type="entry name" value="pyruv_kin"/>
    <property type="match status" value="1"/>
</dbReference>
<dbReference type="PANTHER" id="PTHR11817">
    <property type="entry name" value="PYRUVATE KINASE"/>
    <property type="match status" value="1"/>
</dbReference>
<dbReference type="Pfam" id="PF00224">
    <property type="entry name" value="PK"/>
    <property type="match status" value="1"/>
</dbReference>
<dbReference type="Pfam" id="PF02887">
    <property type="entry name" value="PK_C"/>
    <property type="match status" value="1"/>
</dbReference>
<dbReference type="PRINTS" id="PR01050">
    <property type="entry name" value="PYRUVTKNASE"/>
</dbReference>
<dbReference type="SUPFAM" id="SSF51621">
    <property type="entry name" value="Phosphoenolpyruvate/pyruvate domain"/>
    <property type="match status" value="1"/>
</dbReference>
<dbReference type="SUPFAM" id="SSF50800">
    <property type="entry name" value="PK beta-barrel domain-like"/>
    <property type="match status" value="1"/>
</dbReference>
<dbReference type="SUPFAM" id="SSF52935">
    <property type="entry name" value="PK C-terminal domain-like"/>
    <property type="match status" value="1"/>
</dbReference>
<dbReference type="PROSITE" id="PS00110">
    <property type="entry name" value="PYRUVATE_KINASE"/>
    <property type="match status" value="1"/>
</dbReference>
<evidence type="ECO:0000250" key="1"/>
<evidence type="ECO:0000250" key="2">
    <source>
        <dbReference type="UniProtKB" id="P14618"/>
    </source>
</evidence>
<evidence type="ECO:0000305" key="3"/>
<proteinExistence type="inferred from homology"/>
<reference key="1">
    <citation type="journal article" date="2012" name="J. Bacteriol.">
        <title>Genome sequence of the model hyperthermophilic archaeon Thermococcus litoralis NS-C.</title>
        <authorList>
            <person name="Gardner A.F."/>
            <person name="Kumar S."/>
            <person name="Perler F.B."/>
        </authorList>
    </citation>
    <scope>NUCLEOTIDE SEQUENCE [LARGE SCALE GENOMIC DNA]</scope>
    <source>
        <strain>ATCC 51850 / DSM 5473 / JCM 8560 / NS-C</strain>
    </source>
</reference>
<reference key="2">
    <citation type="journal article" date="1995" name="J. Bacteriol.">
        <title>Molecular characterization of the genes encoding the tungsten-containing aldehyde ferredoxin oxidoreductase from Pyrococcus furiosus and formaldehyde ferredoxin oxidoreductase from Thermococcus litoralis.</title>
        <authorList>
            <person name="Kletzin A."/>
            <person name="Mukund S."/>
            <person name="Kelley-Crouse T.L."/>
            <person name="Chan M.K.S."/>
            <person name="Rees D.C."/>
            <person name="Adams M.W.W."/>
        </authorList>
    </citation>
    <scope>NUCLEOTIDE SEQUENCE [GENOMIC DNA] OF 1-216</scope>
    <source>
        <strain>ATCC 51850 / DSM 5473 / JCM 8560 / NS-C</strain>
    </source>
</reference>
<name>KPYK_THELN</name>
<comment type="catalytic activity">
    <reaction>
        <text>pyruvate + ATP = phosphoenolpyruvate + ADP + H(+)</text>
        <dbReference type="Rhea" id="RHEA:18157"/>
        <dbReference type="ChEBI" id="CHEBI:15361"/>
        <dbReference type="ChEBI" id="CHEBI:15378"/>
        <dbReference type="ChEBI" id="CHEBI:30616"/>
        <dbReference type="ChEBI" id="CHEBI:58702"/>
        <dbReference type="ChEBI" id="CHEBI:456216"/>
        <dbReference type="EC" id="2.7.1.40"/>
    </reaction>
</comment>
<comment type="cofactor">
    <cofactor evidence="1">
        <name>a divalent metal cation</name>
        <dbReference type="ChEBI" id="CHEBI:60240"/>
    </cofactor>
</comment>
<comment type="pathway">
    <text>Carbohydrate degradation; glycolysis; pyruvate from D-glyceraldehyde 3-phosphate: step 5/5.</text>
</comment>
<comment type="subunit">
    <text evidence="1">Homotetramer.</text>
</comment>
<comment type="similarity">
    <text evidence="3">Belongs to the pyruvate kinase family.</text>
</comment>
<comment type="sequence caution" evidence="3">
    <conflict type="erroneous initiation">
        <sequence resource="EMBL-CDS" id="CAA58793"/>
    </conflict>
    <text>Extended N-terminus.</text>
</comment>